<feature type="chain" id="PRO_1000201528" description="Ribosomal RNA large subunit methyltransferase M">
    <location>
        <begin position="1"/>
        <end position="366"/>
    </location>
</feature>
<feature type="active site" description="Proton acceptor" evidence="1">
    <location>
        <position position="306"/>
    </location>
</feature>
<feature type="binding site" evidence="1">
    <location>
        <position position="188"/>
    </location>
    <ligand>
        <name>S-adenosyl-L-methionine</name>
        <dbReference type="ChEBI" id="CHEBI:59789"/>
    </ligand>
</feature>
<feature type="binding site" evidence="1">
    <location>
        <begin position="221"/>
        <end position="224"/>
    </location>
    <ligand>
        <name>S-adenosyl-L-methionine</name>
        <dbReference type="ChEBI" id="CHEBI:59789"/>
    </ligand>
</feature>
<feature type="binding site" evidence="1">
    <location>
        <position position="240"/>
    </location>
    <ligand>
        <name>S-adenosyl-L-methionine</name>
        <dbReference type="ChEBI" id="CHEBI:59789"/>
    </ligand>
</feature>
<feature type="binding site" evidence="1">
    <location>
        <position position="260"/>
    </location>
    <ligand>
        <name>S-adenosyl-L-methionine</name>
        <dbReference type="ChEBI" id="CHEBI:59789"/>
    </ligand>
</feature>
<feature type="binding site" evidence="1">
    <location>
        <position position="277"/>
    </location>
    <ligand>
        <name>S-adenosyl-L-methionine</name>
        <dbReference type="ChEBI" id="CHEBI:59789"/>
    </ligand>
</feature>
<protein>
    <recommendedName>
        <fullName evidence="1">Ribosomal RNA large subunit methyltransferase M</fullName>
        <ecNumber evidence="1">2.1.1.186</ecNumber>
    </recommendedName>
    <alternativeName>
        <fullName evidence="1">23S rRNA (cytidine2498-2'-O)-methyltransferase</fullName>
    </alternativeName>
    <alternativeName>
        <fullName evidence="1">23S rRNA 2'-O-ribose methyltransferase RlmM</fullName>
    </alternativeName>
</protein>
<keyword id="KW-0963">Cytoplasm</keyword>
<keyword id="KW-0489">Methyltransferase</keyword>
<keyword id="KW-0698">rRNA processing</keyword>
<keyword id="KW-0949">S-adenosyl-L-methionine</keyword>
<keyword id="KW-0808">Transferase</keyword>
<reference key="1">
    <citation type="journal article" date="2008" name="Genome Res.">
        <title>Comparative genome analysis of Salmonella enteritidis PT4 and Salmonella gallinarum 287/91 provides insights into evolutionary and host adaptation pathways.</title>
        <authorList>
            <person name="Thomson N.R."/>
            <person name="Clayton D.J."/>
            <person name="Windhorst D."/>
            <person name="Vernikos G."/>
            <person name="Davidson S."/>
            <person name="Churcher C."/>
            <person name="Quail M.A."/>
            <person name="Stevens M."/>
            <person name="Jones M.A."/>
            <person name="Watson M."/>
            <person name="Barron A."/>
            <person name="Layton A."/>
            <person name="Pickard D."/>
            <person name="Kingsley R.A."/>
            <person name="Bignell A."/>
            <person name="Clark L."/>
            <person name="Harris B."/>
            <person name="Ormond D."/>
            <person name="Abdellah Z."/>
            <person name="Brooks K."/>
            <person name="Cherevach I."/>
            <person name="Chillingworth T."/>
            <person name="Woodward J."/>
            <person name="Norberczak H."/>
            <person name="Lord A."/>
            <person name="Arrowsmith C."/>
            <person name="Jagels K."/>
            <person name="Moule S."/>
            <person name="Mungall K."/>
            <person name="Saunders M."/>
            <person name="Whitehead S."/>
            <person name="Chabalgoity J.A."/>
            <person name="Maskell D."/>
            <person name="Humphreys T."/>
            <person name="Roberts M."/>
            <person name="Barrow P.A."/>
            <person name="Dougan G."/>
            <person name="Parkhill J."/>
        </authorList>
    </citation>
    <scope>NUCLEOTIDE SEQUENCE [LARGE SCALE GENOMIC DNA]</scope>
    <source>
        <strain>287/91 / NCTC 13346</strain>
    </source>
</reference>
<proteinExistence type="inferred from homology"/>
<accession>B5RDV8</accession>
<gene>
    <name evidence="1" type="primary">rlmM</name>
    <name type="ordered locus">SG2890</name>
</gene>
<organism>
    <name type="scientific">Salmonella gallinarum (strain 287/91 / NCTC 13346)</name>
    <dbReference type="NCBI Taxonomy" id="550538"/>
    <lineage>
        <taxon>Bacteria</taxon>
        <taxon>Pseudomonadati</taxon>
        <taxon>Pseudomonadota</taxon>
        <taxon>Gammaproteobacteria</taxon>
        <taxon>Enterobacterales</taxon>
        <taxon>Enterobacteriaceae</taxon>
        <taxon>Salmonella</taxon>
    </lineage>
</organism>
<evidence type="ECO:0000255" key="1">
    <source>
        <dbReference type="HAMAP-Rule" id="MF_01551"/>
    </source>
</evidence>
<sequence length="366" mass="41951">MNKVVLLCRPGFEKECAAEITDKAGKREIFGFARVKENAGYVIYECYQPEDGEKLISELPFSSLIFARQWFVVGELLQHLPPEDRITPIVGMLQGVVEKGGELRVEVADTNESKELMKFCRKFTVPLRAALRDAGVLTNYETPKRPVVHVFFIAPGCCYTGYSFAHNNSPFYMGIPRLKFPSDAPSRSTLKLEEALHVFIPEDEWDERLANGMYAVDLGACPGGWTYQLVKRNMWVYSVDNGPMAQSLMDTGQVTWLREDGFRYRPNRNNISWMVCDMVEKPAKVTALMAQWLVNGWCRETIFNLKLPMKKRYEEVSHNLAYLQAQLDEHGVNAQIQARQLYHDREEVTVHVRRLWAAVGGSRDER</sequence>
<dbReference type="EC" id="2.1.1.186" evidence="1"/>
<dbReference type="EMBL" id="AM933173">
    <property type="protein sequence ID" value="CAR38696.1"/>
    <property type="molecule type" value="Genomic_DNA"/>
</dbReference>
<dbReference type="RefSeq" id="WP_001045495.1">
    <property type="nucleotide sequence ID" value="NC_011274.1"/>
</dbReference>
<dbReference type="SMR" id="B5RDV8"/>
<dbReference type="KEGG" id="seg:SG2890"/>
<dbReference type="HOGENOM" id="CLU_043780_0_0_6"/>
<dbReference type="Proteomes" id="UP000008321">
    <property type="component" value="Chromosome"/>
</dbReference>
<dbReference type="GO" id="GO:0005737">
    <property type="term" value="C:cytoplasm"/>
    <property type="evidence" value="ECO:0007669"/>
    <property type="project" value="UniProtKB-SubCell"/>
</dbReference>
<dbReference type="GO" id="GO:0008757">
    <property type="term" value="F:S-adenosylmethionine-dependent methyltransferase activity"/>
    <property type="evidence" value="ECO:0007669"/>
    <property type="project" value="UniProtKB-UniRule"/>
</dbReference>
<dbReference type="GO" id="GO:0032259">
    <property type="term" value="P:methylation"/>
    <property type="evidence" value="ECO:0007669"/>
    <property type="project" value="UniProtKB-KW"/>
</dbReference>
<dbReference type="GO" id="GO:0006364">
    <property type="term" value="P:rRNA processing"/>
    <property type="evidence" value="ECO:0007669"/>
    <property type="project" value="UniProtKB-UniRule"/>
</dbReference>
<dbReference type="FunFam" id="3.30.2300.20:FF:000001">
    <property type="entry name" value="Ribosomal RNA large subunit methyltransferase M"/>
    <property type="match status" value="1"/>
</dbReference>
<dbReference type="FunFam" id="3.30.70.2810:FF:000001">
    <property type="entry name" value="Ribosomal RNA large subunit methyltransferase M"/>
    <property type="match status" value="1"/>
</dbReference>
<dbReference type="FunFam" id="3.40.50.150:FF:000020">
    <property type="entry name" value="Ribosomal RNA large subunit methyltransferase M"/>
    <property type="match status" value="1"/>
</dbReference>
<dbReference type="Gene3D" id="3.30.2300.20">
    <property type="match status" value="1"/>
</dbReference>
<dbReference type="Gene3D" id="3.30.70.2810">
    <property type="match status" value="1"/>
</dbReference>
<dbReference type="Gene3D" id="3.40.50.150">
    <property type="entry name" value="Vaccinia Virus protein VP39"/>
    <property type="match status" value="1"/>
</dbReference>
<dbReference type="HAMAP" id="MF_01551">
    <property type="entry name" value="23SrRNA_methyltr_M"/>
    <property type="match status" value="1"/>
</dbReference>
<dbReference type="InterPro" id="IPR040739">
    <property type="entry name" value="RlmM_FDX"/>
</dbReference>
<dbReference type="InterPro" id="IPR048646">
    <property type="entry name" value="RlmM_THUMP-like"/>
</dbReference>
<dbReference type="InterPro" id="IPR002877">
    <property type="entry name" value="RNA_MeTrfase_FtsJ_dom"/>
</dbReference>
<dbReference type="InterPro" id="IPR011224">
    <property type="entry name" value="rRNA_MeTrfase_M"/>
</dbReference>
<dbReference type="InterPro" id="IPR029063">
    <property type="entry name" value="SAM-dependent_MTases_sf"/>
</dbReference>
<dbReference type="NCBIfam" id="NF008734">
    <property type="entry name" value="PRK11760.1"/>
    <property type="match status" value="1"/>
</dbReference>
<dbReference type="PANTHER" id="PTHR37524">
    <property type="entry name" value="RIBOSOMAL RNA LARGE SUBUNIT METHYLTRANSFERASE M"/>
    <property type="match status" value="1"/>
</dbReference>
<dbReference type="PANTHER" id="PTHR37524:SF2">
    <property type="entry name" value="RIBOSOMAL RNA METHYLTRANSFERASE FTSJ DOMAIN-CONTAINING PROTEIN"/>
    <property type="match status" value="1"/>
</dbReference>
<dbReference type="Pfam" id="PF01728">
    <property type="entry name" value="FtsJ"/>
    <property type="match status" value="1"/>
</dbReference>
<dbReference type="Pfam" id="PF18125">
    <property type="entry name" value="RlmM_FDX"/>
    <property type="match status" value="1"/>
</dbReference>
<dbReference type="Pfam" id="PF21239">
    <property type="entry name" value="RLMM_N"/>
    <property type="match status" value="1"/>
</dbReference>
<dbReference type="PIRSF" id="PIRSF028774">
    <property type="entry name" value="UCP028774"/>
    <property type="match status" value="1"/>
</dbReference>
<dbReference type="SUPFAM" id="SSF53335">
    <property type="entry name" value="S-adenosyl-L-methionine-dependent methyltransferases"/>
    <property type="match status" value="1"/>
</dbReference>
<comment type="function">
    <text evidence="1">Catalyzes the 2'-O-methylation at nucleotide C2498 in 23S rRNA.</text>
</comment>
<comment type="catalytic activity">
    <reaction evidence="1">
        <text>cytidine(2498) in 23S rRNA + S-adenosyl-L-methionine = 2'-O-methylcytidine(2498) in 23S rRNA + S-adenosyl-L-homocysteine + H(+)</text>
        <dbReference type="Rhea" id="RHEA:42788"/>
        <dbReference type="Rhea" id="RHEA-COMP:10244"/>
        <dbReference type="Rhea" id="RHEA-COMP:10245"/>
        <dbReference type="ChEBI" id="CHEBI:15378"/>
        <dbReference type="ChEBI" id="CHEBI:57856"/>
        <dbReference type="ChEBI" id="CHEBI:59789"/>
        <dbReference type="ChEBI" id="CHEBI:74495"/>
        <dbReference type="ChEBI" id="CHEBI:82748"/>
        <dbReference type="EC" id="2.1.1.186"/>
    </reaction>
</comment>
<comment type="subunit">
    <text evidence="1">Monomer.</text>
</comment>
<comment type="subcellular location">
    <subcellularLocation>
        <location evidence="1">Cytoplasm</location>
    </subcellularLocation>
</comment>
<comment type="similarity">
    <text evidence="1">Belongs to the class I-like SAM-binding methyltransferase superfamily. RNA methyltransferase RlmE family. RlmM subfamily.</text>
</comment>
<name>RLMM_SALG2</name>